<comment type="function">
    <text evidence="1">Binds 16S rRNA, required for the assembly of 30S particles and may also be responsible for determining the conformation of the 16S rRNA at the A site.</text>
</comment>
<comment type="cofactor">
    <cofactor evidence="1">
        <name>Zn(2+)</name>
        <dbReference type="ChEBI" id="CHEBI:29105"/>
    </cofactor>
    <text evidence="1">Binds 1 zinc ion per subunit.</text>
</comment>
<comment type="subunit">
    <text evidence="1">Part of the 30S ribosomal subunit. Contacts proteins S3 and S10.</text>
</comment>
<comment type="similarity">
    <text evidence="1">Belongs to the universal ribosomal protein uS14 family. Zinc-binding uS14 subfamily.</text>
</comment>
<reference key="1">
    <citation type="journal article" date="2007" name="Proc. Natl. Acad. Sci. U.S.A.">
        <title>Genome plasticity of BCG and impact on vaccine efficacy.</title>
        <authorList>
            <person name="Brosch R."/>
            <person name="Gordon S.V."/>
            <person name="Garnier T."/>
            <person name="Eiglmeier K."/>
            <person name="Frigui W."/>
            <person name="Valenti P."/>
            <person name="Dos Santos S."/>
            <person name="Duthoy S."/>
            <person name="Lacroix C."/>
            <person name="Garcia-Pelayo C."/>
            <person name="Inwald J.K."/>
            <person name="Golby P."/>
            <person name="Garcia J.N."/>
            <person name="Hewinson R.G."/>
            <person name="Behr M.A."/>
            <person name="Quail M.A."/>
            <person name="Churcher C."/>
            <person name="Barrell B.G."/>
            <person name="Parkhill J."/>
            <person name="Cole S.T."/>
        </authorList>
    </citation>
    <scope>NUCLEOTIDE SEQUENCE [LARGE SCALE GENOMIC DNA]</scope>
    <source>
        <strain>BCG / Pasteur 1173P2</strain>
    </source>
</reference>
<dbReference type="EMBL" id="AM408590">
    <property type="protein sequence ID" value="CAL70753.1"/>
    <property type="molecule type" value="Genomic_DNA"/>
</dbReference>
<dbReference type="RefSeq" id="WP_003403667.1">
    <property type="nucleotide sequence ID" value="NC_008769.1"/>
</dbReference>
<dbReference type="SMR" id="A1KGJ8"/>
<dbReference type="KEGG" id="mbb:BCG_0767"/>
<dbReference type="HOGENOM" id="CLU_139869_3_0_11"/>
<dbReference type="Proteomes" id="UP000001472">
    <property type="component" value="Chromosome"/>
</dbReference>
<dbReference type="GO" id="GO:0005737">
    <property type="term" value="C:cytoplasm"/>
    <property type="evidence" value="ECO:0007669"/>
    <property type="project" value="UniProtKB-ARBA"/>
</dbReference>
<dbReference type="GO" id="GO:0015935">
    <property type="term" value="C:small ribosomal subunit"/>
    <property type="evidence" value="ECO:0007669"/>
    <property type="project" value="TreeGrafter"/>
</dbReference>
<dbReference type="GO" id="GO:0019843">
    <property type="term" value="F:rRNA binding"/>
    <property type="evidence" value="ECO:0007669"/>
    <property type="project" value="UniProtKB-UniRule"/>
</dbReference>
<dbReference type="GO" id="GO:0003735">
    <property type="term" value="F:structural constituent of ribosome"/>
    <property type="evidence" value="ECO:0007669"/>
    <property type="project" value="InterPro"/>
</dbReference>
<dbReference type="GO" id="GO:0008270">
    <property type="term" value="F:zinc ion binding"/>
    <property type="evidence" value="ECO:0007669"/>
    <property type="project" value="UniProtKB-UniRule"/>
</dbReference>
<dbReference type="GO" id="GO:0006412">
    <property type="term" value="P:translation"/>
    <property type="evidence" value="ECO:0007669"/>
    <property type="project" value="UniProtKB-UniRule"/>
</dbReference>
<dbReference type="FunFam" id="4.10.830.10:FF:000001">
    <property type="entry name" value="30S ribosomal protein S14 type Z"/>
    <property type="match status" value="1"/>
</dbReference>
<dbReference type="Gene3D" id="4.10.830.10">
    <property type="entry name" value="30s Ribosomal Protein S14, Chain N"/>
    <property type="match status" value="1"/>
</dbReference>
<dbReference type="HAMAP" id="MF_01364_B">
    <property type="entry name" value="Ribosomal_uS14_2_B"/>
    <property type="match status" value="1"/>
</dbReference>
<dbReference type="InterPro" id="IPR001209">
    <property type="entry name" value="Ribosomal_uS14"/>
</dbReference>
<dbReference type="InterPro" id="IPR023053">
    <property type="entry name" value="Ribosomal_uS14_bact"/>
</dbReference>
<dbReference type="InterPro" id="IPR018271">
    <property type="entry name" value="Ribosomal_uS14_CS"/>
</dbReference>
<dbReference type="InterPro" id="IPR043140">
    <property type="entry name" value="Ribosomal_uS14_sf"/>
</dbReference>
<dbReference type="NCBIfam" id="NF005974">
    <property type="entry name" value="PRK08061.1"/>
    <property type="match status" value="1"/>
</dbReference>
<dbReference type="PANTHER" id="PTHR19836">
    <property type="entry name" value="30S RIBOSOMAL PROTEIN S14"/>
    <property type="match status" value="1"/>
</dbReference>
<dbReference type="PANTHER" id="PTHR19836:SF19">
    <property type="entry name" value="SMALL RIBOSOMAL SUBUNIT PROTEIN US14M"/>
    <property type="match status" value="1"/>
</dbReference>
<dbReference type="Pfam" id="PF00253">
    <property type="entry name" value="Ribosomal_S14"/>
    <property type="match status" value="1"/>
</dbReference>
<dbReference type="SUPFAM" id="SSF57716">
    <property type="entry name" value="Glucocorticoid receptor-like (DNA-binding domain)"/>
    <property type="match status" value="1"/>
</dbReference>
<dbReference type="PROSITE" id="PS00527">
    <property type="entry name" value="RIBOSOMAL_S14"/>
    <property type="match status" value="1"/>
</dbReference>
<feature type="chain" id="PRO_1000067952" description="Small ribosomal subunit protein uS14B">
    <location>
        <begin position="1"/>
        <end position="61"/>
    </location>
</feature>
<feature type="binding site" evidence="1">
    <location>
        <position position="24"/>
    </location>
    <ligand>
        <name>Zn(2+)</name>
        <dbReference type="ChEBI" id="CHEBI:29105"/>
    </ligand>
</feature>
<feature type="binding site" evidence="1">
    <location>
        <position position="27"/>
    </location>
    <ligand>
        <name>Zn(2+)</name>
        <dbReference type="ChEBI" id="CHEBI:29105"/>
    </ligand>
</feature>
<feature type="binding site" evidence="1">
    <location>
        <position position="40"/>
    </location>
    <ligand>
        <name>Zn(2+)</name>
        <dbReference type="ChEBI" id="CHEBI:29105"/>
    </ligand>
</feature>
<feature type="binding site" evidence="1">
    <location>
        <position position="43"/>
    </location>
    <ligand>
        <name>Zn(2+)</name>
        <dbReference type="ChEBI" id="CHEBI:29105"/>
    </ligand>
</feature>
<name>RS14Z_MYCBP</name>
<accession>A1KGJ8</accession>
<proteinExistence type="inferred from homology"/>
<protein>
    <recommendedName>
        <fullName evidence="1">Small ribosomal subunit protein uS14B</fullName>
    </recommendedName>
    <alternativeName>
        <fullName evidence="2">30S ribosomal protein S14 type Z</fullName>
    </alternativeName>
</protein>
<gene>
    <name evidence="1" type="primary">rpsZ</name>
    <name evidence="1" type="synonym">rpsN</name>
    <name type="ordered locus">BCG_0767</name>
</gene>
<sequence length="61" mass="6825">MAKKALVNKAAGKPRFAVRAYTRCSKCGRPRAVYRKFGLCRICLREMAHAGELPGVQKSSW</sequence>
<keyword id="KW-0479">Metal-binding</keyword>
<keyword id="KW-0687">Ribonucleoprotein</keyword>
<keyword id="KW-0689">Ribosomal protein</keyword>
<keyword id="KW-0694">RNA-binding</keyword>
<keyword id="KW-0699">rRNA-binding</keyword>
<keyword id="KW-0862">Zinc</keyword>
<evidence type="ECO:0000255" key="1">
    <source>
        <dbReference type="HAMAP-Rule" id="MF_01364"/>
    </source>
</evidence>
<evidence type="ECO:0000305" key="2"/>
<organism>
    <name type="scientific">Mycobacterium bovis (strain BCG / Pasteur 1173P2)</name>
    <dbReference type="NCBI Taxonomy" id="410289"/>
    <lineage>
        <taxon>Bacteria</taxon>
        <taxon>Bacillati</taxon>
        <taxon>Actinomycetota</taxon>
        <taxon>Actinomycetes</taxon>
        <taxon>Mycobacteriales</taxon>
        <taxon>Mycobacteriaceae</taxon>
        <taxon>Mycobacterium</taxon>
        <taxon>Mycobacterium tuberculosis complex</taxon>
    </lineage>
</organism>